<accession>Q8KAI9</accession>
<proteinExistence type="inferred from homology"/>
<sequence>MSEKMIKVTQVRSVIGGTKKQKDTIKALGLGRPNHKVEIKDNACTRGQIRVVQHLVKVEEL</sequence>
<comment type="subunit">
    <text evidence="1">Part of the 50S ribosomal subunit.</text>
</comment>
<comment type="similarity">
    <text evidence="1">Belongs to the universal ribosomal protein uL30 family.</text>
</comment>
<protein>
    <recommendedName>
        <fullName evidence="1">Large ribosomal subunit protein uL30</fullName>
    </recommendedName>
    <alternativeName>
        <fullName evidence="2">50S ribosomal protein L30</fullName>
    </alternativeName>
</protein>
<name>RL30_CHLTE</name>
<gene>
    <name evidence="1" type="primary">rpmD</name>
    <name type="ordered locus">CT2171</name>
</gene>
<organism>
    <name type="scientific">Chlorobaculum tepidum (strain ATCC 49652 / DSM 12025 / NBRC 103806 / TLS)</name>
    <name type="common">Chlorobium tepidum</name>
    <dbReference type="NCBI Taxonomy" id="194439"/>
    <lineage>
        <taxon>Bacteria</taxon>
        <taxon>Pseudomonadati</taxon>
        <taxon>Chlorobiota</taxon>
        <taxon>Chlorobiia</taxon>
        <taxon>Chlorobiales</taxon>
        <taxon>Chlorobiaceae</taxon>
        <taxon>Chlorobaculum</taxon>
    </lineage>
</organism>
<reference key="1">
    <citation type="journal article" date="2002" name="Proc. Natl. Acad. Sci. U.S.A.">
        <title>The complete genome sequence of Chlorobium tepidum TLS, a photosynthetic, anaerobic, green-sulfur bacterium.</title>
        <authorList>
            <person name="Eisen J.A."/>
            <person name="Nelson K.E."/>
            <person name="Paulsen I.T."/>
            <person name="Heidelberg J.F."/>
            <person name="Wu M."/>
            <person name="Dodson R.J."/>
            <person name="DeBoy R.T."/>
            <person name="Gwinn M.L."/>
            <person name="Nelson W.C."/>
            <person name="Haft D.H."/>
            <person name="Hickey E.K."/>
            <person name="Peterson J.D."/>
            <person name="Durkin A.S."/>
            <person name="Kolonay J.F."/>
            <person name="Yang F."/>
            <person name="Holt I.E."/>
            <person name="Umayam L.A."/>
            <person name="Mason T.M."/>
            <person name="Brenner M."/>
            <person name="Shea T.P."/>
            <person name="Parksey D.S."/>
            <person name="Nierman W.C."/>
            <person name="Feldblyum T.V."/>
            <person name="Hansen C.L."/>
            <person name="Craven M.B."/>
            <person name="Radune D."/>
            <person name="Vamathevan J.J."/>
            <person name="Khouri H.M."/>
            <person name="White O."/>
            <person name="Gruber T.M."/>
            <person name="Ketchum K.A."/>
            <person name="Venter J.C."/>
            <person name="Tettelin H."/>
            <person name="Bryant D.A."/>
            <person name="Fraser C.M."/>
        </authorList>
    </citation>
    <scope>NUCLEOTIDE SEQUENCE [LARGE SCALE GENOMIC DNA]</scope>
    <source>
        <strain>ATCC 49652 / DSM 12025 / NBRC 103806 / TLS</strain>
    </source>
</reference>
<evidence type="ECO:0000255" key="1">
    <source>
        <dbReference type="HAMAP-Rule" id="MF_01371"/>
    </source>
</evidence>
<evidence type="ECO:0000305" key="2"/>
<feature type="chain" id="PRO_0000273765" description="Large ribosomal subunit protein uL30">
    <location>
        <begin position="1"/>
        <end position="61"/>
    </location>
</feature>
<dbReference type="EMBL" id="AE006470">
    <property type="protein sequence ID" value="AAM73387.1"/>
    <property type="molecule type" value="Genomic_DNA"/>
</dbReference>
<dbReference type="RefSeq" id="NP_663045.1">
    <property type="nucleotide sequence ID" value="NC_002932.3"/>
</dbReference>
<dbReference type="RefSeq" id="WP_010933824.1">
    <property type="nucleotide sequence ID" value="NC_002932.3"/>
</dbReference>
<dbReference type="SMR" id="Q8KAI9"/>
<dbReference type="STRING" id="194439.CT2171"/>
<dbReference type="EnsemblBacteria" id="AAM73387">
    <property type="protein sequence ID" value="AAM73387"/>
    <property type="gene ID" value="CT2171"/>
</dbReference>
<dbReference type="KEGG" id="cte:CT2171"/>
<dbReference type="PATRIC" id="fig|194439.7.peg.1970"/>
<dbReference type="eggNOG" id="COG1841">
    <property type="taxonomic scope" value="Bacteria"/>
</dbReference>
<dbReference type="HOGENOM" id="CLU_131047_2_0_10"/>
<dbReference type="OrthoDB" id="9812790at2"/>
<dbReference type="Proteomes" id="UP000001007">
    <property type="component" value="Chromosome"/>
</dbReference>
<dbReference type="GO" id="GO:0022625">
    <property type="term" value="C:cytosolic large ribosomal subunit"/>
    <property type="evidence" value="ECO:0007669"/>
    <property type="project" value="TreeGrafter"/>
</dbReference>
<dbReference type="GO" id="GO:0003735">
    <property type="term" value="F:structural constituent of ribosome"/>
    <property type="evidence" value="ECO:0007669"/>
    <property type="project" value="InterPro"/>
</dbReference>
<dbReference type="GO" id="GO:0006412">
    <property type="term" value="P:translation"/>
    <property type="evidence" value="ECO:0007669"/>
    <property type="project" value="UniProtKB-UniRule"/>
</dbReference>
<dbReference type="CDD" id="cd01658">
    <property type="entry name" value="Ribosomal_L30"/>
    <property type="match status" value="1"/>
</dbReference>
<dbReference type="Gene3D" id="3.30.1390.20">
    <property type="entry name" value="Ribosomal protein L30, ferredoxin-like fold domain"/>
    <property type="match status" value="1"/>
</dbReference>
<dbReference type="HAMAP" id="MF_01371_B">
    <property type="entry name" value="Ribosomal_uL30_B"/>
    <property type="match status" value="1"/>
</dbReference>
<dbReference type="InterPro" id="IPR036919">
    <property type="entry name" value="Ribo_uL30_ferredoxin-like_sf"/>
</dbReference>
<dbReference type="InterPro" id="IPR005996">
    <property type="entry name" value="Ribosomal_uL30_bac-type"/>
</dbReference>
<dbReference type="InterPro" id="IPR016082">
    <property type="entry name" value="Ribosomal_uL30_ferredoxin-like"/>
</dbReference>
<dbReference type="NCBIfam" id="TIGR01308">
    <property type="entry name" value="rpmD_bact"/>
    <property type="match status" value="1"/>
</dbReference>
<dbReference type="PANTHER" id="PTHR15892:SF2">
    <property type="entry name" value="LARGE RIBOSOMAL SUBUNIT PROTEIN UL30M"/>
    <property type="match status" value="1"/>
</dbReference>
<dbReference type="PANTHER" id="PTHR15892">
    <property type="entry name" value="MITOCHONDRIAL RIBOSOMAL PROTEIN L30"/>
    <property type="match status" value="1"/>
</dbReference>
<dbReference type="Pfam" id="PF00327">
    <property type="entry name" value="Ribosomal_L30"/>
    <property type="match status" value="1"/>
</dbReference>
<dbReference type="PIRSF" id="PIRSF002211">
    <property type="entry name" value="Ribosomal_L30_bac-type"/>
    <property type="match status" value="1"/>
</dbReference>
<dbReference type="SUPFAM" id="SSF55129">
    <property type="entry name" value="Ribosomal protein L30p/L7e"/>
    <property type="match status" value="1"/>
</dbReference>
<keyword id="KW-1185">Reference proteome</keyword>
<keyword id="KW-0687">Ribonucleoprotein</keyword>
<keyword id="KW-0689">Ribosomal protein</keyword>